<feature type="chain" id="PRO_0000325983" description="Photosystem I assembly protein Ycf4">
    <location>
        <begin position="1"/>
        <end position="178"/>
    </location>
</feature>
<feature type="transmembrane region" description="Helical" evidence="1">
    <location>
        <begin position="19"/>
        <end position="39"/>
    </location>
</feature>
<feature type="transmembrane region" description="Helical" evidence="1">
    <location>
        <begin position="61"/>
        <end position="81"/>
    </location>
</feature>
<keyword id="KW-0472">Membrane</keyword>
<keyword id="KW-0602">Photosynthesis</keyword>
<keyword id="KW-1185">Reference proteome</keyword>
<keyword id="KW-0793">Thylakoid</keyword>
<keyword id="KW-0812">Transmembrane</keyword>
<keyword id="KW-1133">Transmembrane helix</keyword>
<reference key="1">
    <citation type="journal article" date="2006" name="Proc. Natl. Acad. Sci. U.S.A.">
        <title>Genome sequence of Synechococcus CC9311: insights into adaptation to a coastal environment.</title>
        <authorList>
            <person name="Palenik B."/>
            <person name="Ren Q."/>
            <person name="Dupont C.L."/>
            <person name="Myers G.S."/>
            <person name="Heidelberg J.F."/>
            <person name="Badger J.H."/>
            <person name="Madupu R."/>
            <person name="Nelson W.C."/>
            <person name="Brinkac L.M."/>
            <person name="Dodson R.J."/>
            <person name="Durkin A.S."/>
            <person name="Daugherty S.C."/>
            <person name="Sullivan S.A."/>
            <person name="Khouri H."/>
            <person name="Mohamoud Y."/>
            <person name="Halpin R."/>
            <person name="Paulsen I.T."/>
        </authorList>
    </citation>
    <scope>NUCLEOTIDE SEQUENCE [LARGE SCALE GENOMIC DNA]</scope>
    <source>
        <strain>CC9311</strain>
    </source>
</reference>
<name>YCF4_SYNS3</name>
<evidence type="ECO:0000255" key="1">
    <source>
        <dbReference type="HAMAP-Rule" id="MF_00437"/>
    </source>
</evidence>
<evidence type="ECO:0000305" key="2"/>
<protein>
    <recommendedName>
        <fullName evidence="1">Photosystem I assembly protein Ycf4</fullName>
    </recommendedName>
</protein>
<sequence>MAAELLEQPVLGSRRLSNILVALMVTIGGIGFLFASLSSYLGRDLLPLGHPAGLVFVPQGLIMGLYSLAAALLASYLWAVITINVGSGSNRFDRSAGVVTISRRGFRQPISVEIPIKDIQAVKVEVRDGFNTRRRVSLRVRGRRDMPLTRVGEPLPLAQLEQDGAELARFLGVNLEGL</sequence>
<comment type="function">
    <text evidence="1">Seems to be required for the assembly of the photosystem I complex.</text>
</comment>
<comment type="subcellular location">
    <subcellularLocation>
        <location evidence="1">Cellular thylakoid membrane</location>
        <topology evidence="1">Multi-pass membrane protein</topology>
    </subcellularLocation>
</comment>
<comment type="similarity">
    <text evidence="1">Belongs to the Ycf4 family.</text>
</comment>
<comment type="sequence caution" evidence="2">
    <conflict type="erroneous initiation">
        <sequence resource="EMBL-CDS" id="ABI47378"/>
    </conflict>
</comment>
<organism>
    <name type="scientific">Synechococcus sp. (strain CC9311)</name>
    <dbReference type="NCBI Taxonomy" id="64471"/>
    <lineage>
        <taxon>Bacteria</taxon>
        <taxon>Bacillati</taxon>
        <taxon>Cyanobacteriota</taxon>
        <taxon>Cyanophyceae</taxon>
        <taxon>Synechococcales</taxon>
        <taxon>Synechococcaceae</taxon>
        <taxon>Synechococcus</taxon>
    </lineage>
</organism>
<gene>
    <name evidence="1" type="primary">ycf4</name>
    <name type="ordered locus">sync_0898</name>
</gene>
<dbReference type="EMBL" id="CP000435">
    <property type="protein sequence ID" value="ABI47378.1"/>
    <property type="status" value="ALT_INIT"/>
    <property type="molecule type" value="Genomic_DNA"/>
</dbReference>
<dbReference type="RefSeq" id="WP_041426421.1">
    <property type="nucleotide sequence ID" value="NC_008319.1"/>
</dbReference>
<dbReference type="STRING" id="64471.sync_0898"/>
<dbReference type="KEGG" id="syg:sync_0898"/>
<dbReference type="eggNOG" id="ENOG502Z7YX">
    <property type="taxonomic scope" value="Bacteria"/>
</dbReference>
<dbReference type="HOGENOM" id="CLU_095465_0_0_3"/>
<dbReference type="OrthoDB" id="7059574at2"/>
<dbReference type="Proteomes" id="UP000001961">
    <property type="component" value="Chromosome"/>
</dbReference>
<dbReference type="GO" id="GO:0009522">
    <property type="term" value="C:photosystem I"/>
    <property type="evidence" value="ECO:0007669"/>
    <property type="project" value="InterPro"/>
</dbReference>
<dbReference type="GO" id="GO:0031676">
    <property type="term" value="C:plasma membrane-derived thylakoid membrane"/>
    <property type="evidence" value="ECO:0007669"/>
    <property type="project" value="UniProtKB-SubCell"/>
</dbReference>
<dbReference type="GO" id="GO:0015979">
    <property type="term" value="P:photosynthesis"/>
    <property type="evidence" value="ECO:0007669"/>
    <property type="project" value="UniProtKB-UniRule"/>
</dbReference>
<dbReference type="HAMAP" id="MF_00437">
    <property type="entry name" value="Ycf4"/>
    <property type="match status" value="1"/>
</dbReference>
<dbReference type="InterPro" id="IPR003359">
    <property type="entry name" value="PSI_Ycf4_assembly"/>
</dbReference>
<dbReference type="NCBIfam" id="NF002712">
    <property type="entry name" value="PRK02542.1"/>
    <property type="match status" value="1"/>
</dbReference>
<dbReference type="Pfam" id="PF02392">
    <property type="entry name" value="Ycf4"/>
    <property type="match status" value="1"/>
</dbReference>
<accession>Q0IBR1</accession>
<proteinExistence type="inferred from homology"/>